<feature type="chain" id="PRO_1000098223" description="6,7-dimethyl-8-ribityllumazine synthase">
    <location>
        <begin position="1"/>
        <end position="156"/>
    </location>
</feature>
<feature type="active site" description="Proton donor" evidence="1">
    <location>
        <position position="89"/>
    </location>
</feature>
<feature type="binding site" evidence="1">
    <location>
        <position position="22"/>
    </location>
    <ligand>
        <name>5-amino-6-(D-ribitylamino)uracil</name>
        <dbReference type="ChEBI" id="CHEBI:15934"/>
    </ligand>
</feature>
<feature type="binding site" evidence="1">
    <location>
        <begin position="57"/>
        <end position="59"/>
    </location>
    <ligand>
        <name>5-amino-6-(D-ribitylamino)uracil</name>
        <dbReference type="ChEBI" id="CHEBI:15934"/>
    </ligand>
</feature>
<feature type="binding site" evidence="1">
    <location>
        <begin position="81"/>
        <end position="83"/>
    </location>
    <ligand>
        <name>5-amino-6-(D-ribitylamino)uracil</name>
        <dbReference type="ChEBI" id="CHEBI:15934"/>
    </ligand>
</feature>
<feature type="binding site" evidence="1">
    <location>
        <begin position="86"/>
        <end position="87"/>
    </location>
    <ligand>
        <name>(2S)-2-hydroxy-3-oxobutyl phosphate</name>
        <dbReference type="ChEBI" id="CHEBI:58830"/>
    </ligand>
</feature>
<feature type="binding site" evidence="1">
    <location>
        <position position="114"/>
    </location>
    <ligand>
        <name>5-amino-6-(D-ribitylamino)uracil</name>
        <dbReference type="ChEBI" id="CHEBI:15934"/>
    </ligand>
</feature>
<feature type="binding site" evidence="1">
    <location>
        <position position="128"/>
    </location>
    <ligand>
        <name>(2S)-2-hydroxy-3-oxobutyl phosphate</name>
        <dbReference type="ChEBI" id="CHEBI:58830"/>
    </ligand>
</feature>
<dbReference type="EC" id="2.5.1.78" evidence="1"/>
<dbReference type="EMBL" id="AM933172">
    <property type="protein sequence ID" value="CAR31985.1"/>
    <property type="molecule type" value="Genomic_DNA"/>
</dbReference>
<dbReference type="SMR" id="B5QTG5"/>
<dbReference type="KEGG" id="set:SEN0399"/>
<dbReference type="HOGENOM" id="CLU_089358_1_1_6"/>
<dbReference type="UniPathway" id="UPA00275">
    <property type="reaction ID" value="UER00404"/>
</dbReference>
<dbReference type="Proteomes" id="UP000000613">
    <property type="component" value="Chromosome"/>
</dbReference>
<dbReference type="GO" id="GO:0005829">
    <property type="term" value="C:cytosol"/>
    <property type="evidence" value="ECO:0007669"/>
    <property type="project" value="TreeGrafter"/>
</dbReference>
<dbReference type="GO" id="GO:0009349">
    <property type="term" value="C:riboflavin synthase complex"/>
    <property type="evidence" value="ECO:0007669"/>
    <property type="project" value="InterPro"/>
</dbReference>
<dbReference type="GO" id="GO:0000906">
    <property type="term" value="F:6,7-dimethyl-8-ribityllumazine synthase activity"/>
    <property type="evidence" value="ECO:0007669"/>
    <property type="project" value="UniProtKB-UniRule"/>
</dbReference>
<dbReference type="GO" id="GO:0009231">
    <property type="term" value="P:riboflavin biosynthetic process"/>
    <property type="evidence" value="ECO:0007669"/>
    <property type="project" value="UniProtKB-UniRule"/>
</dbReference>
<dbReference type="CDD" id="cd09209">
    <property type="entry name" value="Lumazine_synthase-I"/>
    <property type="match status" value="1"/>
</dbReference>
<dbReference type="FunFam" id="3.40.50.960:FF:000001">
    <property type="entry name" value="6,7-dimethyl-8-ribityllumazine synthase"/>
    <property type="match status" value="1"/>
</dbReference>
<dbReference type="Gene3D" id="3.40.50.960">
    <property type="entry name" value="Lumazine/riboflavin synthase"/>
    <property type="match status" value="1"/>
</dbReference>
<dbReference type="HAMAP" id="MF_00178">
    <property type="entry name" value="Lumazine_synth"/>
    <property type="match status" value="1"/>
</dbReference>
<dbReference type="InterPro" id="IPR034964">
    <property type="entry name" value="LS"/>
</dbReference>
<dbReference type="InterPro" id="IPR002180">
    <property type="entry name" value="LS/RS"/>
</dbReference>
<dbReference type="InterPro" id="IPR036467">
    <property type="entry name" value="LS/RS_sf"/>
</dbReference>
<dbReference type="NCBIfam" id="TIGR00114">
    <property type="entry name" value="lumazine-synth"/>
    <property type="match status" value="1"/>
</dbReference>
<dbReference type="NCBIfam" id="NF000812">
    <property type="entry name" value="PRK00061.1-4"/>
    <property type="match status" value="1"/>
</dbReference>
<dbReference type="PANTHER" id="PTHR21058:SF0">
    <property type="entry name" value="6,7-DIMETHYL-8-RIBITYLLUMAZINE SYNTHASE"/>
    <property type="match status" value="1"/>
</dbReference>
<dbReference type="PANTHER" id="PTHR21058">
    <property type="entry name" value="6,7-DIMETHYL-8-RIBITYLLUMAZINE SYNTHASE DMRL SYNTHASE LUMAZINE SYNTHASE"/>
    <property type="match status" value="1"/>
</dbReference>
<dbReference type="Pfam" id="PF00885">
    <property type="entry name" value="DMRL_synthase"/>
    <property type="match status" value="1"/>
</dbReference>
<dbReference type="SUPFAM" id="SSF52121">
    <property type="entry name" value="Lumazine synthase"/>
    <property type="match status" value="1"/>
</dbReference>
<gene>
    <name evidence="1" type="primary">ribH</name>
    <name type="ordered locus">SEN0399</name>
</gene>
<keyword id="KW-0686">Riboflavin biosynthesis</keyword>
<keyword id="KW-0808">Transferase</keyword>
<name>RISB_SALEP</name>
<reference key="1">
    <citation type="journal article" date="2008" name="Genome Res.">
        <title>Comparative genome analysis of Salmonella enteritidis PT4 and Salmonella gallinarum 287/91 provides insights into evolutionary and host adaptation pathways.</title>
        <authorList>
            <person name="Thomson N.R."/>
            <person name="Clayton D.J."/>
            <person name="Windhorst D."/>
            <person name="Vernikos G."/>
            <person name="Davidson S."/>
            <person name="Churcher C."/>
            <person name="Quail M.A."/>
            <person name="Stevens M."/>
            <person name="Jones M.A."/>
            <person name="Watson M."/>
            <person name="Barron A."/>
            <person name="Layton A."/>
            <person name="Pickard D."/>
            <person name="Kingsley R.A."/>
            <person name="Bignell A."/>
            <person name="Clark L."/>
            <person name="Harris B."/>
            <person name="Ormond D."/>
            <person name="Abdellah Z."/>
            <person name="Brooks K."/>
            <person name="Cherevach I."/>
            <person name="Chillingworth T."/>
            <person name="Woodward J."/>
            <person name="Norberczak H."/>
            <person name="Lord A."/>
            <person name="Arrowsmith C."/>
            <person name="Jagels K."/>
            <person name="Moule S."/>
            <person name="Mungall K."/>
            <person name="Saunders M."/>
            <person name="Whitehead S."/>
            <person name="Chabalgoity J.A."/>
            <person name="Maskell D."/>
            <person name="Humphreys T."/>
            <person name="Roberts M."/>
            <person name="Barrow P.A."/>
            <person name="Dougan G."/>
            <person name="Parkhill J."/>
        </authorList>
    </citation>
    <scope>NUCLEOTIDE SEQUENCE [LARGE SCALE GENOMIC DNA]</scope>
    <source>
        <strain>P125109</strain>
    </source>
</reference>
<organism>
    <name type="scientific">Salmonella enteritidis PT4 (strain P125109)</name>
    <dbReference type="NCBI Taxonomy" id="550537"/>
    <lineage>
        <taxon>Bacteria</taxon>
        <taxon>Pseudomonadati</taxon>
        <taxon>Pseudomonadota</taxon>
        <taxon>Gammaproteobacteria</taxon>
        <taxon>Enterobacterales</taxon>
        <taxon>Enterobacteriaceae</taxon>
        <taxon>Salmonella</taxon>
    </lineage>
</organism>
<protein>
    <recommendedName>
        <fullName evidence="1">6,7-dimethyl-8-ribityllumazine synthase</fullName>
        <shortName evidence="1">DMRL synthase</shortName>
        <shortName evidence="1">LS</shortName>
        <shortName evidence="1">Lumazine synthase</shortName>
        <ecNumber evidence="1">2.5.1.78</ecNumber>
    </recommendedName>
</protein>
<comment type="function">
    <text evidence="1">Catalyzes the formation of 6,7-dimethyl-8-ribityllumazine by condensation of 5-amino-6-(D-ribitylamino)uracil with 3,4-dihydroxy-2-butanone 4-phosphate. This is the penultimate step in the biosynthesis of riboflavin.</text>
</comment>
<comment type="catalytic activity">
    <reaction evidence="1">
        <text>(2S)-2-hydroxy-3-oxobutyl phosphate + 5-amino-6-(D-ribitylamino)uracil = 6,7-dimethyl-8-(1-D-ribityl)lumazine + phosphate + 2 H2O + H(+)</text>
        <dbReference type="Rhea" id="RHEA:26152"/>
        <dbReference type="ChEBI" id="CHEBI:15377"/>
        <dbReference type="ChEBI" id="CHEBI:15378"/>
        <dbReference type="ChEBI" id="CHEBI:15934"/>
        <dbReference type="ChEBI" id="CHEBI:43474"/>
        <dbReference type="ChEBI" id="CHEBI:58201"/>
        <dbReference type="ChEBI" id="CHEBI:58830"/>
        <dbReference type="EC" id="2.5.1.78"/>
    </reaction>
</comment>
<comment type="pathway">
    <text evidence="1">Cofactor biosynthesis; riboflavin biosynthesis; riboflavin from 2-hydroxy-3-oxobutyl phosphate and 5-amino-6-(D-ribitylamino)uracil: step 1/2.</text>
</comment>
<comment type="subunit">
    <text evidence="1">Forms an icosahedral capsid composed of 60 subunits, arranged as a dodecamer of pentamers.</text>
</comment>
<comment type="similarity">
    <text evidence="1">Belongs to the DMRL synthase family.</text>
</comment>
<sequence>MNIIKANVAAPDARVAITIARFNQFINDSLLDGAVDALTRIGQVKDDNITVVWVPGAYELPLATEALAKSGKYDAVVALGTVIRGGTAHFEYVAGGASNGLASVAQDSGVPVAFGVLTTESIEQAIERAGTKAGNKGAEAALTALEMINVLKAIKA</sequence>
<evidence type="ECO:0000255" key="1">
    <source>
        <dbReference type="HAMAP-Rule" id="MF_00178"/>
    </source>
</evidence>
<proteinExistence type="inferred from homology"/>
<accession>B5QTG5</accession>